<comment type="function">
    <text evidence="4 7 8 9">Beta-galactosyltransferase that transfers beta-galactose to hydroxylysine residues of type I collagen (PubMed:19075007, PubMed:22216269, PubMed:27402836). By acting on collagen glycosylation, facilitates the formation of collagen triple helix (PubMed:27402836). Also involved in the biosynthesis of collagen type IV (PubMed:30412317).</text>
</comment>
<comment type="catalytic activity">
    <reaction evidence="4">
        <text>(5R)-5-hydroxy-L-lysyl-[collagen] + UDP-alpha-D-galactose = (5R)-5-O-(beta-D-galactosyl)-5-hydroxy-L-lysyl-[collagen] + UDP + H(+)</text>
        <dbReference type="Rhea" id="RHEA:12637"/>
        <dbReference type="Rhea" id="RHEA-COMP:12752"/>
        <dbReference type="Rhea" id="RHEA-COMP:12753"/>
        <dbReference type="ChEBI" id="CHEBI:15378"/>
        <dbReference type="ChEBI" id="CHEBI:58223"/>
        <dbReference type="ChEBI" id="CHEBI:66914"/>
        <dbReference type="ChEBI" id="CHEBI:133442"/>
        <dbReference type="ChEBI" id="CHEBI:133443"/>
        <dbReference type="EC" id="2.4.1.50"/>
    </reaction>
</comment>
<comment type="biophysicochemical properties">
    <kinetics>
        <KM evidence="4">18.7 uM for UDP-galactose (at 37 degrees Celsius and pH 7.4)</KM>
        <KM evidence="7">29.9 uM for UDP-galactose (at 37 degrees Celsius and pH 7.4)</KM>
    </kinetics>
</comment>
<comment type="subcellular location">
    <subcellularLocation>
        <location evidence="2 6">Endoplasmic reticulum lumen</location>
    </subcellularLocation>
    <text evidence="6">Colocalized with PLOD3 and mannose binding lectin/MBL2.</text>
</comment>
<comment type="tissue specificity">
    <text evidence="4">Ubiquitous with higher levels in placenta, heart, lung and spleen.</text>
</comment>
<comment type="PTM">
    <text evidence="5 6">N-glycosylated.</text>
</comment>
<comment type="disease" evidence="9">
    <disease id="DI-05511">
        <name>Brain small vessel disease 3</name>
        <acronym>BSVD3</acronym>
        <description>An autosomal recessive form of brain small vessel disease, a cerebrovascular disorder with variable manifestations reflecting the location and severity of the vascular defect. BSVD3 patients may have disease onset in utero or early infancy with subsequent global developmental delay, spasticity, and porencephaly on brain imaging. Other patients may have normal or mildly delayed development with sudden onset of intracranial hemorrhage causing acute neurologic deterioration.</description>
        <dbReference type="MIM" id="618360"/>
    </disease>
    <text>The disease is caused by variants affecting the gene represented in this entry.</text>
</comment>
<comment type="similarity">
    <text evidence="10">Belongs to the glycosyltransferase 25 family.</text>
</comment>
<comment type="caution">
    <text evidence="10">Has no glucosyltransferase activity.</text>
</comment>
<dbReference type="EC" id="2.4.1.50" evidence="4"/>
<dbReference type="EMBL" id="AK074941">
    <property type="protein sequence ID" value="BAC11307.1"/>
    <property type="molecule type" value="mRNA"/>
</dbReference>
<dbReference type="EMBL" id="AK075541">
    <property type="protein sequence ID" value="BAC11684.1"/>
    <property type="molecule type" value="mRNA"/>
</dbReference>
<dbReference type="EMBL" id="AC010618">
    <property type="status" value="NOT_ANNOTATED_CDS"/>
    <property type="molecule type" value="Genomic_DNA"/>
</dbReference>
<dbReference type="EMBL" id="CH471106">
    <property type="protein sequence ID" value="EAW84622.1"/>
    <property type="molecule type" value="Genomic_DNA"/>
</dbReference>
<dbReference type="EMBL" id="BC108308">
    <property type="protein sequence ID" value="AAI08309.1"/>
    <property type="molecule type" value="mRNA"/>
</dbReference>
<dbReference type="CCDS" id="CCDS12363.1"/>
<dbReference type="RefSeq" id="NP_078932.2">
    <property type="nucleotide sequence ID" value="NM_024656.3"/>
</dbReference>
<dbReference type="SMR" id="Q8NBJ5"/>
<dbReference type="BioGRID" id="122826">
    <property type="interactions" value="174"/>
</dbReference>
<dbReference type="CORUM" id="Q8NBJ5"/>
<dbReference type="FunCoup" id="Q8NBJ5">
    <property type="interactions" value="1290"/>
</dbReference>
<dbReference type="IntAct" id="Q8NBJ5">
    <property type="interactions" value="50"/>
</dbReference>
<dbReference type="MINT" id="Q8NBJ5"/>
<dbReference type="STRING" id="9606.ENSP00000252599"/>
<dbReference type="CAZy" id="GT25">
    <property type="family name" value="Glycosyltransferase Family 25"/>
</dbReference>
<dbReference type="GlyConnect" id="1631">
    <property type="glycosylation" value="8 N-Linked glycans (3 sites)"/>
</dbReference>
<dbReference type="GlyCosmos" id="Q8NBJ5">
    <property type="glycosylation" value="3 sites, 8 glycans"/>
</dbReference>
<dbReference type="GlyGen" id="Q8NBJ5">
    <property type="glycosylation" value="5 sites, 29 N-linked glycans (3 sites), 2 O-linked glycans (1 site)"/>
</dbReference>
<dbReference type="iPTMnet" id="Q8NBJ5"/>
<dbReference type="PhosphoSitePlus" id="Q8NBJ5"/>
<dbReference type="SwissPalm" id="Q8NBJ5"/>
<dbReference type="BioMuta" id="COLGALT1"/>
<dbReference type="DMDM" id="74715064"/>
<dbReference type="CPTAC" id="CPTAC-1298"/>
<dbReference type="CPTAC" id="CPTAC-208"/>
<dbReference type="CPTAC" id="CPTAC-209"/>
<dbReference type="jPOST" id="Q8NBJ5"/>
<dbReference type="MassIVE" id="Q8NBJ5"/>
<dbReference type="PaxDb" id="9606-ENSP00000252599"/>
<dbReference type="PeptideAtlas" id="Q8NBJ5"/>
<dbReference type="ProteomicsDB" id="72778"/>
<dbReference type="Pumba" id="Q8NBJ5"/>
<dbReference type="TopDownProteomics" id="Q8NBJ5"/>
<dbReference type="Antibodypedia" id="54139">
    <property type="antibodies" value="49 antibodies from 14 providers"/>
</dbReference>
<dbReference type="DNASU" id="79709"/>
<dbReference type="Ensembl" id="ENST00000252599.9">
    <property type="protein sequence ID" value="ENSP00000252599.3"/>
    <property type="gene ID" value="ENSG00000130309.12"/>
</dbReference>
<dbReference type="GeneID" id="79709"/>
<dbReference type="KEGG" id="hsa:79709"/>
<dbReference type="MANE-Select" id="ENST00000252599.9">
    <property type="protein sequence ID" value="ENSP00000252599.3"/>
    <property type="RefSeq nucleotide sequence ID" value="NM_024656.4"/>
    <property type="RefSeq protein sequence ID" value="NP_078932.2"/>
</dbReference>
<dbReference type="UCSC" id="uc002nhc.2">
    <property type="organism name" value="human"/>
</dbReference>
<dbReference type="AGR" id="HGNC:26182"/>
<dbReference type="CTD" id="79709"/>
<dbReference type="DisGeNET" id="79709"/>
<dbReference type="GeneCards" id="COLGALT1"/>
<dbReference type="HGNC" id="HGNC:26182">
    <property type="gene designation" value="COLGALT1"/>
</dbReference>
<dbReference type="HPA" id="ENSG00000130309">
    <property type="expression patterns" value="Low tissue specificity"/>
</dbReference>
<dbReference type="MalaCards" id="COLGALT1"/>
<dbReference type="MIM" id="617531">
    <property type="type" value="gene"/>
</dbReference>
<dbReference type="MIM" id="618360">
    <property type="type" value="phenotype"/>
</dbReference>
<dbReference type="neXtProt" id="NX_Q8NBJ5"/>
<dbReference type="OpenTargets" id="ENSG00000130309"/>
<dbReference type="Orphanet" id="99810">
    <property type="disease" value="Familial porencephaly"/>
</dbReference>
<dbReference type="PharmGKB" id="PA134991138"/>
<dbReference type="VEuPathDB" id="HostDB:ENSG00000130309"/>
<dbReference type="eggNOG" id="KOG4179">
    <property type="taxonomic scope" value="Eukaryota"/>
</dbReference>
<dbReference type="GeneTree" id="ENSGT01030000234558"/>
<dbReference type="HOGENOM" id="CLU_024037_2_0_1"/>
<dbReference type="InParanoid" id="Q8NBJ5"/>
<dbReference type="OMA" id="VVWNNEQ"/>
<dbReference type="OrthoDB" id="47375at2759"/>
<dbReference type="PAN-GO" id="Q8NBJ5">
    <property type="GO annotations" value="1 GO annotation based on evolutionary models"/>
</dbReference>
<dbReference type="PhylomeDB" id="Q8NBJ5"/>
<dbReference type="TreeFam" id="TF313826"/>
<dbReference type="BioCyc" id="MetaCyc:ENSG00000130309-MONOMER"/>
<dbReference type="BRENDA" id="2.4.1.50">
    <property type="organism ID" value="2681"/>
</dbReference>
<dbReference type="PathwayCommons" id="Q8NBJ5"/>
<dbReference type="Reactome" id="R-HSA-1650814">
    <property type="pathway name" value="Collagen biosynthesis and modifying enzymes"/>
</dbReference>
<dbReference type="SABIO-RK" id="Q8NBJ5"/>
<dbReference type="SignaLink" id="Q8NBJ5"/>
<dbReference type="SIGNOR" id="Q8NBJ5"/>
<dbReference type="BioGRID-ORCS" id="79709">
    <property type="hits" value="13 hits in 1156 CRISPR screens"/>
</dbReference>
<dbReference type="ChiTaRS" id="COLGALT1">
    <property type="organism name" value="human"/>
</dbReference>
<dbReference type="GenomeRNAi" id="79709"/>
<dbReference type="Pharos" id="Q8NBJ5">
    <property type="development level" value="Tbio"/>
</dbReference>
<dbReference type="PRO" id="PR:Q8NBJ5"/>
<dbReference type="Proteomes" id="UP000005640">
    <property type="component" value="Chromosome 19"/>
</dbReference>
<dbReference type="RNAct" id="Q8NBJ5">
    <property type="molecule type" value="protein"/>
</dbReference>
<dbReference type="Bgee" id="ENSG00000130309">
    <property type="expression patterns" value="Expressed in stromal cell of endometrium and 189 other cell types or tissues"/>
</dbReference>
<dbReference type="ExpressionAtlas" id="Q8NBJ5">
    <property type="expression patterns" value="baseline and differential"/>
</dbReference>
<dbReference type="GO" id="GO:0005788">
    <property type="term" value="C:endoplasmic reticulum lumen"/>
    <property type="evidence" value="ECO:0000314"/>
    <property type="project" value="UniProtKB"/>
</dbReference>
<dbReference type="GO" id="GO:0016020">
    <property type="term" value="C:membrane"/>
    <property type="evidence" value="ECO:0007005"/>
    <property type="project" value="UniProtKB"/>
</dbReference>
<dbReference type="GO" id="GO:0050211">
    <property type="term" value="F:procollagen galactosyltransferase activity"/>
    <property type="evidence" value="ECO:0000315"/>
    <property type="project" value="UniProtKB"/>
</dbReference>
<dbReference type="GO" id="GO:0030199">
    <property type="term" value="P:collagen fibril organization"/>
    <property type="evidence" value="ECO:0000304"/>
    <property type="project" value="Reactome"/>
</dbReference>
<dbReference type="GO" id="GO:1904028">
    <property type="term" value="P:positive regulation of collagen fibril organization"/>
    <property type="evidence" value="ECO:0000315"/>
    <property type="project" value="UniProtKB"/>
</dbReference>
<dbReference type="GO" id="GO:0006493">
    <property type="term" value="P:protein O-linked glycosylation"/>
    <property type="evidence" value="ECO:0000315"/>
    <property type="project" value="FlyBase"/>
</dbReference>
<dbReference type="CDD" id="cd00761">
    <property type="entry name" value="Glyco_tranf_GTA_type"/>
    <property type="match status" value="1"/>
</dbReference>
<dbReference type="CDD" id="cd06532">
    <property type="entry name" value="Glyco_transf_25"/>
    <property type="match status" value="1"/>
</dbReference>
<dbReference type="FunFam" id="3.90.550.10:FF:000048">
    <property type="entry name" value="Glycosyltransferase 25 family member 1"/>
    <property type="match status" value="1"/>
</dbReference>
<dbReference type="Gene3D" id="3.90.550.10">
    <property type="entry name" value="Spore Coat Polysaccharide Biosynthesis Protein SpsA, Chain A"/>
    <property type="match status" value="1"/>
</dbReference>
<dbReference type="InterPro" id="IPR050757">
    <property type="entry name" value="Collagen_mod_GT25"/>
</dbReference>
<dbReference type="InterPro" id="IPR002654">
    <property type="entry name" value="Glyco_trans_25"/>
</dbReference>
<dbReference type="InterPro" id="IPR029044">
    <property type="entry name" value="Nucleotide-diphossugar_trans"/>
</dbReference>
<dbReference type="PANTHER" id="PTHR10730:SF28">
    <property type="entry name" value="PROCOLLAGEN GALACTOSYLTRANSFERASE 1"/>
    <property type="match status" value="1"/>
</dbReference>
<dbReference type="PANTHER" id="PTHR10730">
    <property type="entry name" value="PROCOLLAGEN-LYSINE,2-OXOGLUTARATE 5-DIOXYGENASE/GLYCOSYLTRANSFERASE 25 FAMILY MEMBER"/>
    <property type="match status" value="1"/>
</dbReference>
<dbReference type="Pfam" id="PF13704">
    <property type="entry name" value="Glyco_tranf_2_4"/>
    <property type="match status" value="1"/>
</dbReference>
<dbReference type="Pfam" id="PF01755">
    <property type="entry name" value="Glyco_transf_25"/>
    <property type="match status" value="1"/>
</dbReference>
<dbReference type="SUPFAM" id="SSF53448">
    <property type="entry name" value="Nucleotide-diphospho-sugar transferases"/>
    <property type="match status" value="1"/>
</dbReference>
<dbReference type="PROSITE" id="PS00014">
    <property type="entry name" value="ER_TARGET"/>
    <property type="match status" value="1"/>
</dbReference>
<proteinExistence type="evidence at protein level"/>
<protein>
    <recommendedName>
        <fullName>Procollagen galactosyltransferase 1</fullName>
        <ecNumber evidence="4">2.4.1.50</ecNumber>
    </recommendedName>
    <alternativeName>
        <fullName>Collagen beta(1-O)galactosyltransferase 1</fullName>
        <shortName>ColGalT 1</shortName>
    </alternativeName>
    <alternativeName>
        <fullName>Glycosyltransferase 25 family member 1</fullName>
    </alternativeName>
    <alternativeName>
        <fullName>Hydroxylysine galactosyltransferase 1</fullName>
    </alternativeName>
</protein>
<sequence>MAAAPRAGRRRGQPLLALLLLLLAPLPPGAPPGADAYFPEERWSPESPLQAPRVLIALLARNAAHALPTTLGALERLRHPRERTALWVATDHNMDNTSTVLREWLVAVKSLYHSVEWRPAEEPRSYPDEEGPKHWSDSRYEHVMKLRQAALKSARDMWADYILFVDADNLILNPDTLSLLIAENKTVVAPMLDSRAAYSNFWCGMTSQGYYKRTPAYIPIRKRDRRGCFAVPMVHSTFLIDLRKAASRNLAFYPPHPDYTWSFDDIIVFAFSCKQAEVQMYVCNKEEYGFLPVPLRAHSTLQDEAESFMHVQLEVMVKHPPAEPSRFISAPTKTPDKMGFDEVFMINLRRRQDRRERMLRALQAQEIECRLVEAVDGKAMNTSQVEALGIQMLPGYRDPYHGRPLTKGELGCFLSHYNIWKEVVDRGLQKSLVFEDDLRFEIFFKRRLMNLMRDVEREGLDWDLIYVGRKRMQVEHPEKAVPRVRNLVEADYSYWTLAYVISLQGARKLLAAEPLSKMLPVDEFLPVMFDKHPVSEYKAHFSLRNLHAFSVEPLLIYPTHYTGDDGYVSDTETSVVWNNEHVKTDWDRAKSQKMREQQALSREAKNSDVLQSPLDSAARDEL</sequence>
<reference key="1">
    <citation type="journal article" date="2005" name="DNA Res.">
        <title>Signal sequence and keyword trap in silico for selection of full-length human cDNAs encoding secretion or membrane proteins from oligo-capped cDNA libraries.</title>
        <authorList>
            <person name="Otsuki T."/>
            <person name="Ota T."/>
            <person name="Nishikawa T."/>
            <person name="Hayashi K."/>
            <person name="Suzuki Y."/>
            <person name="Yamamoto J."/>
            <person name="Wakamatsu A."/>
            <person name="Kimura K."/>
            <person name="Sakamoto K."/>
            <person name="Hatano N."/>
            <person name="Kawai Y."/>
            <person name="Ishii S."/>
            <person name="Saito K."/>
            <person name="Kojima S."/>
            <person name="Sugiyama T."/>
            <person name="Ono T."/>
            <person name="Okano K."/>
            <person name="Yoshikawa Y."/>
            <person name="Aotsuka S."/>
            <person name="Sasaki N."/>
            <person name="Hattori A."/>
            <person name="Okumura K."/>
            <person name="Nagai K."/>
            <person name="Sugano S."/>
            <person name="Isogai T."/>
        </authorList>
    </citation>
    <scope>NUCLEOTIDE SEQUENCE [LARGE SCALE MRNA]</scope>
    <source>
        <tissue>Teratocarcinoma</tissue>
    </source>
</reference>
<reference key="2">
    <citation type="journal article" date="2004" name="Nature">
        <title>The DNA sequence and biology of human chromosome 19.</title>
        <authorList>
            <person name="Grimwood J."/>
            <person name="Gordon L.A."/>
            <person name="Olsen A.S."/>
            <person name="Terry A."/>
            <person name="Schmutz J."/>
            <person name="Lamerdin J.E."/>
            <person name="Hellsten U."/>
            <person name="Goodstein D."/>
            <person name="Couronne O."/>
            <person name="Tran-Gyamfi M."/>
            <person name="Aerts A."/>
            <person name="Altherr M."/>
            <person name="Ashworth L."/>
            <person name="Bajorek E."/>
            <person name="Black S."/>
            <person name="Branscomb E."/>
            <person name="Caenepeel S."/>
            <person name="Carrano A.V."/>
            <person name="Caoile C."/>
            <person name="Chan Y.M."/>
            <person name="Christensen M."/>
            <person name="Cleland C.A."/>
            <person name="Copeland A."/>
            <person name="Dalin E."/>
            <person name="Dehal P."/>
            <person name="Denys M."/>
            <person name="Detter J.C."/>
            <person name="Escobar J."/>
            <person name="Flowers D."/>
            <person name="Fotopulos D."/>
            <person name="Garcia C."/>
            <person name="Georgescu A.M."/>
            <person name="Glavina T."/>
            <person name="Gomez M."/>
            <person name="Gonzales E."/>
            <person name="Groza M."/>
            <person name="Hammon N."/>
            <person name="Hawkins T."/>
            <person name="Haydu L."/>
            <person name="Ho I."/>
            <person name="Huang W."/>
            <person name="Israni S."/>
            <person name="Jett J."/>
            <person name="Kadner K."/>
            <person name="Kimball H."/>
            <person name="Kobayashi A."/>
            <person name="Larionov V."/>
            <person name="Leem S.-H."/>
            <person name="Lopez F."/>
            <person name="Lou Y."/>
            <person name="Lowry S."/>
            <person name="Malfatti S."/>
            <person name="Martinez D."/>
            <person name="McCready P.M."/>
            <person name="Medina C."/>
            <person name="Morgan J."/>
            <person name="Nelson K."/>
            <person name="Nolan M."/>
            <person name="Ovcharenko I."/>
            <person name="Pitluck S."/>
            <person name="Pollard M."/>
            <person name="Popkie A.P."/>
            <person name="Predki P."/>
            <person name="Quan G."/>
            <person name="Ramirez L."/>
            <person name="Rash S."/>
            <person name="Retterer J."/>
            <person name="Rodriguez A."/>
            <person name="Rogers S."/>
            <person name="Salamov A."/>
            <person name="Salazar A."/>
            <person name="She X."/>
            <person name="Smith D."/>
            <person name="Slezak T."/>
            <person name="Solovyev V."/>
            <person name="Thayer N."/>
            <person name="Tice H."/>
            <person name="Tsai M."/>
            <person name="Ustaszewska A."/>
            <person name="Vo N."/>
            <person name="Wagner M."/>
            <person name="Wheeler J."/>
            <person name="Wu K."/>
            <person name="Xie G."/>
            <person name="Yang J."/>
            <person name="Dubchak I."/>
            <person name="Furey T.S."/>
            <person name="DeJong P."/>
            <person name="Dickson M."/>
            <person name="Gordon D."/>
            <person name="Eichler E.E."/>
            <person name="Pennacchio L.A."/>
            <person name="Richardson P."/>
            <person name="Stubbs L."/>
            <person name="Rokhsar D.S."/>
            <person name="Myers R.M."/>
            <person name="Rubin E.M."/>
            <person name="Lucas S.M."/>
        </authorList>
    </citation>
    <scope>NUCLEOTIDE SEQUENCE [LARGE SCALE GENOMIC DNA]</scope>
</reference>
<reference key="3">
    <citation type="submission" date="2005-07" db="EMBL/GenBank/DDBJ databases">
        <authorList>
            <person name="Mural R.J."/>
            <person name="Istrail S."/>
            <person name="Sutton G.G."/>
            <person name="Florea L."/>
            <person name="Halpern A.L."/>
            <person name="Mobarry C.M."/>
            <person name="Lippert R."/>
            <person name="Walenz B."/>
            <person name="Shatkay H."/>
            <person name="Dew I."/>
            <person name="Miller J.R."/>
            <person name="Flanigan M.J."/>
            <person name="Edwards N.J."/>
            <person name="Bolanos R."/>
            <person name="Fasulo D."/>
            <person name="Halldorsson B.V."/>
            <person name="Hannenhalli S."/>
            <person name="Turner R."/>
            <person name="Yooseph S."/>
            <person name="Lu F."/>
            <person name="Nusskern D.R."/>
            <person name="Shue B.C."/>
            <person name="Zheng X.H."/>
            <person name="Zhong F."/>
            <person name="Delcher A.L."/>
            <person name="Huson D.H."/>
            <person name="Kravitz S.A."/>
            <person name="Mouchard L."/>
            <person name="Reinert K."/>
            <person name="Remington K.A."/>
            <person name="Clark A.G."/>
            <person name="Waterman M.S."/>
            <person name="Eichler E.E."/>
            <person name="Adams M.D."/>
            <person name="Hunkapiller M.W."/>
            <person name="Myers E.W."/>
            <person name="Venter J.C."/>
        </authorList>
    </citation>
    <scope>NUCLEOTIDE SEQUENCE [LARGE SCALE GENOMIC DNA]</scope>
</reference>
<reference key="4">
    <citation type="journal article" date="2004" name="Genome Res.">
        <title>The status, quality, and expansion of the NIH full-length cDNA project: the Mammalian Gene Collection (MGC).</title>
        <authorList>
            <consortium name="The MGC Project Team"/>
        </authorList>
    </citation>
    <scope>NUCLEOTIDE SEQUENCE [LARGE SCALE MRNA]</scope>
    <source>
        <tissue>Cervix</tissue>
    </source>
</reference>
<reference key="5">
    <citation type="journal article" date="2009" name="J. Proteome Res.">
        <title>Glycoproteomics analysis of human liver tissue by combination of multiple enzyme digestion and hydrazide chemistry.</title>
        <authorList>
            <person name="Chen R."/>
            <person name="Jiang X."/>
            <person name="Sun D."/>
            <person name="Han G."/>
            <person name="Wang F."/>
            <person name="Ye M."/>
            <person name="Wang L."/>
            <person name="Zou H."/>
        </authorList>
    </citation>
    <scope>GLYCOSYLATION [LARGE SCALE ANALYSIS] AT ASN-96 AND ASN-381</scope>
    <source>
        <tissue>Liver</tissue>
    </source>
</reference>
<reference key="6">
    <citation type="journal article" date="2009" name="Mol. Cell. Biol.">
        <title>Core glycosylation of collagen is initiated by two beta(1-O)galactosyltransferases.</title>
        <authorList>
            <person name="Schegg B."/>
            <person name="Huelsmeier A.J."/>
            <person name="Rutschmann C."/>
            <person name="Maag C."/>
            <person name="Hennet T."/>
        </authorList>
    </citation>
    <scope>FUNCTION</scope>
    <scope>BIOPHYSICOCHEMICAL PROPERTIES</scope>
    <scope>CATALYTIC ACTIVITY</scope>
    <scope>TISSUE SPECIFICITY</scope>
</reference>
<reference key="7">
    <citation type="journal article" date="2010" name="BMC Cell Biol.">
        <title>The human collagen beta(1-O)galactosyltransferase, GLT25D1, is a soluble endoplasmic reticulum localized protein.</title>
        <authorList>
            <person name="Liefhebber J.M."/>
            <person name="Punt S."/>
            <person name="Spaan W.J."/>
            <person name="van Leeuwen H.C."/>
        </authorList>
    </citation>
    <scope>SUBCELLULAR LOCATION</scope>
    <scope>MOTIF</scope>
    <scope>GLYCOSYLATION</scope>
    <scope>IDENTIFICATION BY MASS SPECTROMETRY</scope>
</reference>
<reference key="8">
    <citation type="journal article" date="2011" name="BMC Syst. Biol.">
        <title>Initial characterization of the human central proteome.</title>
        <authorList>
            <person name="Burkard T.R."/>
            <person name="Planyavsky M."/>
            <person name="Kaupe I."/>
            <person name="Breitwieser F.P."/>
            <person name="Buerckstuemmer T."/>
            <person name="Bennett K.L."/>
            <person name="Superti-Furga G."/>
            <person name="Colinge J."/>
        </authorList>
    </citation>
    <scope>IDENTIFICATION BY MASS SPECTROMETRY [LARGE SCALE ANALYSIS]</scope>
</reference>
<reference key="9">
    <citation type="journal article" date="2011" name="PLoS ONE">
        <title>Identification of domains and amino acids essential to the collagen galactosyltransferase activity of GLT25D1.</title>
        <authorList>
            <person name="Perrin-Tricaud C."/>
            <person name="Rutschmann C."/>
            <person name="Hennet T."/>
        </authorList>
    </citation>
    <scope>FUNCTION</scope>
    <scope>BIOPHYSICOCHEMICAL PROPERTIES</scope>
    <scope>MUTAGENESIS OF ASP-166; ASP-168; PRO-292; ASP-336; ASP-461; ASP-463; ASP-585 AND ASP-587</scope>
</reference>
<reference key="10">
    <citation type="journal article" date="2015" name="Proteomics">
        <title>N-terminome analysis of the human mitochondrial proteome.</title>
        <authorList>
            <person name="Vaca Jacome A.S."/>
            <person name="Rabilloud T."/>
            <person name="Schaeffer-Reiss C."/>
            <person name="Rompais M."/>
            <person name="Ayoub D."/>
            <person name="Lane L."/>
            <person name="Bairoch A."/>
            <person name="Van Dorsselaer A."/>
            <person name="Carapito C."/>
        </authorList>
    </citation>
    <scope>IDENTIFICATION BY MASS SPECTROMETRY [LARGE SCALE ANALYSIS]</scope>
</reference>
<reference key="11">
    <citation type="journal article" date="2016" name="J. Biol. Chem.">
        <title>Collagen accumulation in osteosarcoma cells lacking GLT25D1 collagen galactosyltransferase.</title>
        <authorList>
            <person name="Baumann S."/>
            <person name="Hennet T."/>
        </authorList>
    </citation>
    <scope>FUNCTION</scope>
</reference>
<reference key="12">
    <citation type="journal article" date="2018" name="Ann. Neurol.">
        <title>Biallelic COLGALT1 variants are associated with cerebral small vessel disease.</title>
        <authorList>
            <person name="Miyatake S."/>
            <person name="Schneeberger S."/>
            <person name="Koyama N."/>
            <person name="Yokochi K."/>
            <person name="Ohmura K."/>
            <person name="Shiina M."/>
            <person name="Mori H."/>
            <person name="Koshimizu E."/>
            <person name="Imagawa E."/>
            <person name="Uchiyama Y."/>
            <person name="Mitsuhashi S."/>
            <person name="Frith M.C."/>
            <person name="Fujita A."/>
            <person name="Satoh M."/>
            <person name="Taguri M."/>
            <person name="Tomono Y."/>
            <person name="Takahashi K."/>
            <person name="Doi H."/>
            <person name="Takeuchi H."/>
            <person name="Nakashima M."/>
            <person name="Mizuguchi T."/>
            <person name="Takata A."/>
            <person name="Miyake N."/>
            <person name="Saitsu H."/>
            <person name="Tanaka F."/>
            <person name="Ogata K."/>
            <person name="Hennet T."/>
            <person name="Matsumoto N."/>
        </authorList>
    </citation>
    <scope>FUNCTION</scope>
    <scope>INVOLVEMENT IN BSVD3</scope>
    <scope>VARIANTS BSVD3 ARG-151; PRO-154 AND ARG-377</scope>
    <scope>CHARACTERIZATION OF VARIANT BSVD3 ARG-151</scope>
</reference>
<feature type="signal peptide" evidence="1">
    <location>
        <begin position="1"/>
        <end position="29"/>
    </location>
</feature>
<feature type="chain" id="PRO_0000309536" description="Procollagen galactosyltransferase 1">
    <location>
        <begin position="30"/>
        <end position="622"/>
    </location>
</feature>
<feature type="region of interest" description="Disordered" evidence="3">
    <location>
        <begin position="588"/>
        <end position="622"/>
    </location>
</feature>
<feature type="short sequence motif" description="Endoplasmic reticulum retention motif" evidence="6">
    <location>
        <begin position="619"/>
        <end position="622"/>
    </location>
</feature>
<feature type="compositionally biased region" description="Basic and acidic residues" evidence="3">
    <location>
        <begin position="588"/>
        <end position="606"/>
    </location>
</feature>
<feature type="glycosylation site" description="N-linked (GlcNAc...) asparagine" evidence="5">
    <location>
        <position position="96"/>
    </location>
</feature>
<feature type="glycosylation site" description="N-linked (GlcNAc...) asparagine" evidence="1">
    <location>
        <position position="184"/>
    </location>
</feature>
<feature type="glycosylation site" description="N-linked (GlcNAc...) asparagine" evidence="5">
    <location>
        <position position="381"/>
    </location>
</feature>
<feature type="sequence variant" id="VAR_081752" description="In BSVD3; loss of galactosyltransferase activity; dbSNP:rs1478523191." evidence="9">
    <original>L</original>
    <variation>R</variation>
    <location>
        <position position="151"/>
    </location>
</feature>
<feature type="sequence variant" id="VAR_081753" description="In BSVD3; dbSNP:rs181844791." evidence="9">
    <original>A</original>
    <variation>P</variation>
    <location>
        <position position="154"/>
    </location>
</feature>
<feature type="sequence variant" id="VAR_081754" description="In BSVD3; dbSNP:rs1568481244." evidence="9">
    <original>G</original>
    <variation>R</variation>
    <location>
        <position position="377"/>
    </location>
</feature>
<feature type="mutagenesis site" description="Loss of galactosyltransferase activity; when associated with A-168." evidence="7">
    <original>D</original>
    <variation>A</variation>
    <location>
        <position position="166"/>
    </location>
</feature>
<feature type="mutagenesis site" description="Loss of galactosyltransferase activity; when associated with A-166." evidence="7">
    <original>D</original>
    <variation>A</variation>
    <location>
        <position position="168"/>
    </location>
</feature>
<feature type="mutagenesis site" description="Small decrease of galactosyltransferase activity." evidence="7">
    <original>P</original>
    <variation>N</variation>
    <location>
        <position position="292"/>
    </location>
</feature>
<feature type="mutagenesis site" description="Small decrease of galactosyltransferase activity." evidence="7">
    <original>D</original>
    <variation>S</variation>
    <location>
        <position position="336"/>
    </location>
</feature>
<feature type="mutagenesis site" description="Loss of galactosyltransferase activity; when associated with A-463." evidence="7">
    <original>D</original>
    <variation>A</variation>
    <location>
        <position position="461"/>
    </location>
</feature>
<feature type="mutagenesis site" description="Loss of galactosyltransferase activity; when associated with A-461." evidence="7">
    <original>D</original>
    <variation>A</variation>
    <location>
        <position position="463"/>
    </location>
</feature>
<feature type="mutagenesis site" description="No effect on galactosyltransferase activity; when associated with A-587." evidence="7">
    <original>D</original>
    <variation>A</variation>
    <location>
        <position position="585"/>
    </location>
</feature>
<feature type="mutagenesis site" description="No effect on galactosyltransferase activity; when associated with A-585." evidence="7">
    <original>D</original>
    <variation>A</variation>
    <location>
        <position position="587"/>
    </location>
</feature>
<feature type="sequence conflict" description="In Ref. 1; BAC11307." evidence="10" ref="1">
    <original>V</original>
    <variation>E</variation>
    <location>
        <position position="100"/>
    </location>
</feature>
<feature type="sequence conflict" description="In Ref. 1; BAC11307." evidence="10" ref="1">
    <original>I</original>
    <variation>T</variation>
    <location>
        <position position="220"/>
    </location>
</feature>
<organism>
    <name type="scientific">Homo sapiens</name>
    <name type="common">Human</name>
    <dbReference type="NCBI Taxonomy" id="9606"/>
    <lineage>
        <taxon>Eukaryota</taxon>
        <taxon>Metazoa</taxon>
        <taxon>Chordata</taxon>
        <taxon>Craniata</taxon>
        <taxon>Vertebrata</taxon>
        <taxon>Euteleostomi</taxon>
        <taxon>Mammalia</taxon>
        <taxon>Eutheria</taxon>
        <taxon>Euarchontoglires</taxon>
        <taxon>Primates</taxon>
        <taxon>Haplorrhini</taxon>
        <taxon>Catarrhini</taxon>
        <taxon>Hominidae</taxon>
        <taxon>Homo</taxon>
    </lineage>
</organism>
<accession>Q8NBJ5</accession>
<accession>Q8NC64</accession>
<name>GT251_HUMAN</name>
<gene>
    <name type="primary">COLGALT1</name>
    <name type="synonym">GLT25D1</name>
    <name type="ORF">PSEC0241</name>
</gene>
<evidence type="ECO:0000255" key="1"/>
<evidence type="ECO:0000255" key="2">
    <source>
        <dbReference type="PROSITE-ProRule" id="PRU10138"/>
    </source>
</evidence>
<evidence type="ECO:0000256" key="3">
    <source>
        <dbReference type="SAM" id="MobiDB-lite"/>
    </source>
</evidence>
<evidence type="ECO:0000269" key="4">
    <source>
    </source>
</evidence>
<evidence type="ECO:0000269" key="5">
    <source>
    </source>
</evidence>
<evidence type="ECO:0000269" key="6">
    <source>
    </source>
</evidence>
<evidence type="ECO:0000269" key="7">
    <source>
    </source>
</evidence>
<evidence type="ECO:0000269" key="8">
    <source>
    </source>
</evidence>
<evidence type="ECO:0000269" key="9">
    <source>
    </source>
</evidence>
<evidence type="ECO:0000305" key="10"/>
<keyword id="KW-0225">Disease variant</keyword>
<keyword id="KW-0256">Endoplasmic reticulum</keyword>
<keyword id="KW-0325">Glycoprotein</keyword>
<keyword id="KW-0328">Glycosyltransferase</keyword>
<keyword id="KW-1267">Proteomics identification</keyword>
<keyword id="KW-1185">Reference proteome</keyword>
<keyword id="KW-0732">Signal</keyword>
<keyword id="KW-0808">Transferase</keyword>